<organism>
    <name type="scientific">Caldanaerobacter subterraneus subsp. tengcongensis (strain DSM 15242 / JCM 11007 / NBRC 100824 / MB4)</name>
    <name type="common">Thermoanaerobacter tengcongensis</name>
    <dbReference type="NCBI Taxonomy" id="273068"/>
    <lineage>
        <taxon>Bacteria</taxon>
        <taxon>Bacillati</taxon>
        <taxon>Bacillota</taxon>
        <taxon>Clostridia</taxon>
        <taxon>Thermoanaerobacterales</taxon>
        <taxon>Thermoanaerobacteraceae</taxon>
        <taxon>Caldanaerobacter</taxon>
    </lineage>
</organism>
<proteinExistence type="inferred from homology"/>
<protein>
    <recommendedName>
        <fullName evidence="1">Phospho-N-acetylmuramoyl-pentapeptide-transferase</fullName>
        <ecNumber evidence="1">2.7.8.13</ecNumber>
    </recommendedName>
    <alternativeName>
        <fullName evidence="1">UDP-MurNAc-pentapeptide phosphotransferase</fullName>
    </alternativeName>
</protein>
<sequence>MIQKIIFATLLSFTVAIISGRFFIPYLRKLKFGQKVREDGPKTHLKKSGTPTMGGIIFVVATFLTSLIFSPWNKYLFILLAGFLGYGLIGFADDFLKVYFKRSLGLRAREKLLAQFLLAIVISWFIKSNVGTEIIVPFFKRSVDLANFYIPFAVFIIVGTVNSVNLTDGLDGLAAGVSTIVMAFFAMIALFLNDVTYGVFSASLTGGLLGFLRYNKHPAEVFMGDTGSLAIGGAVATVALLTKLPLILPVLGIIYVAEAISVILQVFSFKLFGKRIFKMSPLHHHFELSGWKEEKVVYSFWLVTLIALFVSFYSLS</sequence>
<gene>
    <name evidence="1" type="primary">mraY</name>
    <name type="ordered locus">TTE1648</name>
</gene>
<comment type="function">
    <text evidence="1">Catalyzes the initial step of the lipid cycle reactions in the biosynthesis of the cell wall peptidoglycan: transfers peptidoglycan precursor phospho-MurNAc-pentapeptide from UDP-MurNAc-pentapeptide onto the lipid carrier undecaprenyl phosphate, yielding undecaprenyl-pyrophosphoryl-MurNAc-pentapeptide, known as lipid I.</text>
</comment>
<comment type="catalytic activity">
    <reaction evidence="1">
        <text>UDP-N-acetyl-alpha-D-muramoyl-L-alanyl-gamma-D-glutamyl-meso-2,6-diaminopimeloyl-D-alanyl-D-alanine + di-trans,octa-cis-undecaprenyl phosphate = di-trans,octa-cis-undecaprenyl diphospho-N-acetyl-alpha-D-muramoyl-L-alanyl-D-glutamyl-meso-2,6-diaminopimeloyl-D-alanyl-D-alanine + UMP</text>
        <dbReference type="Rhea" id="RHEA:28386"/>
        <dbReference type="ChEBI" id="CHEBI:57865"/>
        <dbReference type="ChEBI" id="CHEBI:60392"/>
        <dbReference type="ChEBI" id="CHEBI:61386"/>
        <dbReference type="ChEBI" id="CHEBI:61387"/>
        <dbReference type="EC" id="2.7.8.13"/>
    </reaction>
</comment>
<comment type="cofactor">
    <cofactor evidence="1">
        <name>Mg(2+)</name>
        <dbReference type="ChEBI" id="CHEBI:18420"/>
    </cofactor>
</comment>
<comment type="pathway">
    <text evidence="1">Cell wall biogenesis; peptidoglycan biosynthesis.</text>
</comment>
<comment type="subcellular location">
    <subcellularLocation>
        <location evidence="1">Cell membrane</location>
        <topology evidence="1">Multi-pass membrane protein</topology>
    </subcellularLocation>
</comment>
<comment type="similarity">
    <text evidence="1">Belongs to the glycosyltransferase 4 family. MraY subfamily.</text>
</comment>
<keyword id="KW-0131">Cell cycle</keyword>
<keyword id="KW-0132">Cell division</keyword>
<keyword id="KW-1003">Cell membrane</keyword>
<keyword id="KW-0133">Cell shape</keyword>
<keyword id="KW-0961">Cell wall biogenesis/degradation</keyword>
<keyword id="KW-0460">Magnesium</keyword>
<keyword id="KW-0472">Membrane</keyword>
<keyword id="KW-0479">Metal-binding</keyword>
<keyword id="KW-0573">Peptidoglycan synthesis</keyword>
<keyword id="KW-1185">Reference proteome</keyword>
<keyword id="KW-0808">Transferase</keyword>
<keyword id="KW-0812">Transmembrane</keyword>
<keyword id="KW-1133">Transmembrane helix</keyword>
<dbReference type="EC" id="2.7.8.13" evidence="1"/>
<dbReference type="EMBL" id="AE008691">
    <property type="protein sequence ID" value="AAM24850.1"/>
    <property type="molecule type" value="Genomic_DNA"/>
</dbReference>
<dbReference type="RefSeq" id="WP_011025868.1">
    <property type="nucleotide sequence ID" value="NZ_JANUCV010000001.1"/>
</dbReference>
<dbReference type="SMR" id="Q8R9G3"/>
<dbReference type="STRING" id="273068.TTE1648"/>
<dbReference type="KEGG" id="tte:TTE1648"/>
<dbReference type="eggNOG" id="COG0472">
    <property type="taxonomic scope" value="Bacteria"/>
</dbReference>
<dbReference type="HOGENOM" id="CLU_023982_0_1_9"/>
<dbReference type="OrthoDB" id="9805475at2"/>
<dbReference type="UniPathway" id="UPA00219"/>
<dbReference type="Proteomes" id="UP000000555">
    <property type="component" value="Chromosome"/>
</dbReference>
<dbReference type="GO" id="GO:0005886">
    <property type="term" value="C:plasma membrane"/>
    <property type="evidence" value="ECO:0007669"/>
    <property type="project" value="UniProtKB-SubCell"/>
</dbReference>
<dbReference type="GO" id="GO:0046872">
    <property type="term" value="F:metal ion binding"/>
    <property type="evidence" value="ECO:0007669"/>
    <property type="project" value="UniProtKB-KW"/>
</dbReference>
<dbReference type="GO" id="GO:0008963">
    <property type="term" value="F:phospho-N-acetylmuramoyl-pentapeptide-transferase activity"/>
    <property type="evidence" value="ECO:0007669"/>
    <property type="project" value="UniProtKB-UniRule"/>
</dbReference>
<dbReference type="GO" id="GO:0051992">
    <property type="term" value="F:UDP-N-acetylmuramoyl-L-alanyl-D-glutamyl-meso-2,6-diaminopimelyl-D-alanyl-D-alanine:undecaprenyl-phosphate transferase activity"/>
    <property type="evidence" value="ECO:0007669"/>
    <property type="project" value="RHEA"/>
</dbReference>
<dbReference type="GO" id="GO:0051301">
    <property type="term" value="P:cell division"/>
    <property type="evidence" value="ECO:0007669"/>
    <property type="project" value="UniProtKB-KW"/>
</dbReference>
<dbReference type="GO" id="GO:0071555">
    <property type="term" value="P:cell wall organization"/>
    <property type="evidence" value="ECO:0007669"/>
    <property type="project" value="UniProtKB-KW"/>
</dbReference>
<dbReference type="GO" id="GO:0009252">
    <property type="term" value="P:peptidoglycan biosynthetic process"/>
    <property type="evidence" value="ECO:0007669"/>
    <property type="project" value="UniProtKB-UniRule"/>
</dbReference>
<dbReference type="GO" id="GO:0008360">
    <property type="term" value="P:regulation of cell shape"/>
    <property type="evidence" value="ECO:0007669"/>
    <property type="project" value="UniProtKB-KW"/>
</dbReference>
<dbReference type="CDD" id="cd06852">
    <property type="entry name" value="GT_MraY"/>
    <property type="match status" value="1"/>
</dbReference>
<dbReference type="HAMAP" id="MF_00038">
    <property type="entry name" value="MraY"/>
    <property type="match status" value="1"/>
</dbReference>
<dbReference type="InterPro" id="IPR000715">
    <property type="entry name" value="Glycosyl_transferase_4"/>
</dbReference>
<dbReference type="InterPro" id="IPR003524">
    <property type="entry name" value="PNAcMuramoyl-5peptid_Trfase"/>
</dbReference>
<dbReference type="InterPro" id="IPR018480">
    <property type="entry name" value="PNAcMuramoyl-5peptid_Trfase_CS"/>
</dbReference>
<dbReference type="NCBIfam" id="TIGR00445">
    <property type="entry name" value="mraY"/>
    <property type="match status" value="1"/>
</dbReference>
<dbReference type="PANTHER" id="PTHR22926">
    <property type="entry name" value="PHOSPHO-N-ACETYLMURAMOYL-PENTAPEPTIDE-TRANSFERASE"/>
    <property type="match status" value="1"/>
</dbReference>
<dbReference type="PANTHER" id="PTHR22926:SF5">
    <property type="entry name" value="PHOSPHO-N-ACETYLMURAMOYL-PENTAPEPTIDE-TRANSFERASE HOMOLOG"/>
    <property type="match status" value="1"/>
</dbReference>
<dbReference type="Pfam" id="PF00953">
    <property type="entry name" value="Glycos_transf_4"/>
    <property type="match status" value="1"/>
</dbReference>
<dbReference type="Pfam" id="PF10555">
    <property type="entry name" value="MraY_sig1"/>
    <property type="match status" value="1"/>
</dbReference>
<dbReference type="PROSITE" id="PS01347">
    <property type="entry name" value="MRAY_1"/>
    <property type="match status" value="1"/>
</dbReference>
<dbReference type="PROSITE" id="PS01348">
    <property type="entry name" value="MRAY_2"/>
    <property type="match status" value="1"/>
</dbReference>
<feature type="chain" id="PRO_0000108918" description="Phospho-N-acetylmuramoyl-pentapeptide-transferase">
    <location>
        <begin position="1"/>
        <end position="316"/>
    </location>
</feature>
<feature type="transmembrane region" description="Helical" evidence="1">
    <location>
        <begin position="5"/>
        <end position="25"/>
    </location>
</feature>
<feature type="transmembrane region" description="Helical" evidence="1">
    <location>
        <begin position="52"/>
        <end position="72"/>
    </location>
</feature>
<feature type="transmembrane region" description="Helical" evidence="1">
    <location>
        <begin position="76"/>
        <end position="96"/>
    </location>
</feature>
<feature type="transmembrane region" description="Helical" evidence="1">
    <location>
        <begin position="116"/>
        <end position="136"/>
    </location>
</feature>
<feature type="transmembrane region" description="Helical" evidence="1">
    <location>
        <begin position="145"/>
        <end position="165"/>
    </location>
</feature>
<feature type="transmembrane region" description="Helical" evidence="1">
    <location>
        <begin position="172"/>
        <end position="192"/>
    </location>
</feature>
<feature type="transmembrane region" description="Helical" evidence="1">
    <location>
        <begin position="195"/>
        <end position="212"/>
    </location>
</feature>
<feature type="transmembrane region" description="Helical" evidence="1">
    <location>
        <begin position="221"/>
        <end position="241"/>
    </location>
</feature>
<feature type="transmembrane region" description="Helical" evidence="1">
    <location>
        <begin position="244"/>
        <end position="264"/>
    </location>
</feature>
<feature type="transmembrane region" description="Helical" evidence="1">
    <location>
        <begin position="296"/>
        <end position="316"/>
    </location>
</feature>
<accession>Q8R9G3</accession>
<name>MRAY_CALS4</name>
<evidence type="ECO:0000255" key="1">
    <source>
        <dbReference type="HAMAP-Rule" id="MF_00038"/>
    </source>
</evidence>
<reference key="1">
    <citation type="journal article" date="2002" name="Genome Res.">
        <title>A complete sequence of the T. tengcongensis genome.</title>
        <authorList>
            <person name="Bao Q."/>
            <person name="Tian Y."/>
            <person name="Li W."/>
            <person name="Xu Z."/>
            <person name="Xuan Z."/>
            <person name="Hu S."/>
            <person name="Dong W."/>
            <person name="Yang J."/>
            <person name="Chen Y."/>
            <person name="Xue Y."/>
            <person name="Xu Y."/>
            <person name="Lai X."/>
            <person name="Huang L."/>
            <person name="Dong X."/>
            <person name="Ma Y."/>
            <person name="Ling L."/>
            <person name="Tan H."/>
            <person name="Chen R."/>
            <person name="Wang J."/>
            <person name="Yu J."/>
            <person name="Yang H."/>
        </authorList>
    </citation>
    <scope>NUCLEOTIDE SEQUENCE [LARGE SCALE GENOMIC DNA]</scope>
    <source>
        <strain>DSM 15242 / JCM 11007 / NBRC 100824 / MB4</strain>
    </source>
</reference>